<feature type="chain" id="PRO_1000194550" description="tRNA pseudouridine synthase A">
    <location>
        <begin position="1"/>
        <end position="270"/>
    </location>
</feature>
<feature type="region of interest" description="RNA binding" evidence="1">
    <location>
        <begin position="107"/>
        <end position="111"/>
    </location>
</feature>
<feature type="region of interest" description="Interaction with tRNA" evidence="1">
    <location>
        <begin position="168"/>
        <end position="172"/>
    </location>
</feature>
<feature type="active site" description="Nucleophile" evidence="1">
    <location>
        <position position="60"/>
    </location>
</feature>
<feature type="binding site" evidence="1">
    <location>
        <position position="118"/>
    </location>
    <ligand>
        <name>substrate</name>
    </ligand>
</feature>
<feature type="site" description="Interaction with tRNA; Important for base-flipping" evidence="1">
    <location>
        <position position="58"/>
    </location>
</feature>
<feature type="site" description="Interaction with tRNA" evidence="1">
    <location>
        <position position="78"/>
    </location>
</feature>
<feature type="site" description="Interaction with tRNA" evidence="1">
    <location>
        <position position="110"/>
    </location>
</feature>
<feature type="site" description="Interaction with tRNA" evidence="1">
    <location>
        <position position="126"/>
    </location>
</feature>
<feature type="site" description="Interaction with tRNA" evidence="1">
    <location>
        <position position="139"/>
    </location>
</feature>
<protein>
    <recommendedName>
        <fullName evidence="1">tRNA pseudouridine synthase A</fullName>
        <ecNumber evidence="1">5.4.99.12</ecNumber>
    </recommendedName>
    <alternativeName>
        <fullName evidence="1">tRNA pseudouridine(38-40) synthase</fullName>
    </alternativeName>
    <alternativeName>
        <fullName evidence="1">tRNA pseudouridylate synthase I</fullName>
    </alternativeName>
    <alternativeName>
        <fullName evidence="1">tRNA-uridine isomerase I</fullName>
    </alternativeName>
</protein>
<evidence type="ECO:0000255" key="1">
    <source>
        <dbReference type="HAMAP-Rule" id="MF_00171"/>
    </source>
</evidence>
<reference key="1">
    <citation type="journal article" date="2008" name="J. Bacteriol.">
        <title>Insights into the environmental resistance gene pool from the genome sequence of the multidrug-resistant environmental isolate Escherichia coli SMS-3-5.</title>
        <authorList>
            <person name="Fricke W.F."/>
            <person name="Wright M.S."/>
            <person name="Lindell A.H."/>
            <person name="Harkins D.M."/>
            <person name="Baker-Austin C."/>
            <person name="Ravel J."/>
            <person name="Stepanauskas R."/>
        </authorList>
    </citation>
    <scope>NUCLEOTIDE SEQUENCE [LARGE SCALE GENOMIC DNA]</scope>
    <source>
        <strain>SMS-3-5 / SECEC</strain>
    </source>
</reference>
<comment type="function">
    <text evidence="1">Formation of pseudouridine at positions 38, 39 and 40 in the anticodon stem and loop of transfer RNAs.</text>
</comment>
<comment type="catalytic activity">
    <reaction evidence="1">
        <text>uridine(38/39/40) in tRNA = pseudouridine(38/39/40) in tRNA</text>
        <dbReference type="Rhea" id="RHEA:22376"/>
        <dbReference type="Rhea" id="RHEA-COMP:10085"/>
        <dbReference type="Rhea" id="RHEA-COMP:10087"/>
        <dbReference type="ChEBI" id="CHEBI:65314"/>
        <dbReference type="ChEBI" id="CHEBI:65315"/>
        <dbReference type="EC" id="5.4.99.12"/>
    </reaction>
</comment>
<comment type="subunit">
    <text evidence="1">Homodimer.</text>
</comment>
<comment type="similarity">
    <text evidence="1">Belongs to the tRNA pseudouridine synthase TruA family.</text>
</comment>
<name>TRUA_ECOSM</name>
<keyword id="KW-0413">Isomerase</keyword>
<keyword id="KW-0819">tRNA processing</keyword>
<accession>B1LLS3</accession>
<proteinExistence type="inferred from homology"/>
<organism>
    <name type="scientific">Escherichia coli (strain SMS-3-5 / SECEC)</name>
    <dbReference type="NCBI Taxonomy" id="439855"/>
    <lineage>
        <taxon>Bacteria</taxon>
        <taxon>Pseudomonadati</taxon>
        <taxon>Pseudomonadota</taxon>
        <taxon>Gammaproteobacteria</taxon>
        <taxon>Enterobacterales</taxon>
        <taxon>Enterobacteriaceae</taxon>
        <taxon>Escherichia</taxon>
    </lineage>
</organism>
<sequence>MSDQQQPPVYKIALGIEYDGSKYYGWQRQNEVRSVQEKLEKALSQVANEPITVFCAGRTDAGVHGTGQVVHFETTAQRKDAAWTLGVNANLPGDIAVRWVKAVPDDFHARFSATARRYRYIIYNHRLRPAVLSKGVTHFYEPLDAERMHRAAQCLLGENDFTSFRAVQCQSRTPWRNVMHINVTRHGPYVVVDIKANAFVHHMVRNIVGSLMEVGAHNQPESWIAELLAAKDRTLAAATAKAEGLYLVAVDYPDRYDLPKPPMGPLFLAD</sequence>
<gene>
    <name evidence="1" type="primary">truA</name>
    <name type="ordered locus">EcSMS35_2474</name>
</gene>
<dbReference type="EC" id="5.4.99.12" evidence="1"/>
<dbReference type="EMBL" id="CP000970">
    <property type="protein sequence ID" value="ACB15984.1"/>
    <property type="molecule type" value="Genomic_DNA"/>
</dbReference>
<dbReference type="RefSeq" id="WP_001283590.1">
    <property type="nucleotide sequence ID" value="NC_010498.1"/>
</dbReference>
<dbReference type="SMR" id="B1LLS3"/>
<dbReference type="GeneID" id="75172446"/>
<dbReference type="KEGG" id="ecm:EcSMS35_2474"/>
<dbReference type="HOGENOM" id="CLU_014673_0_2_6"/>
<dbReference type="Proteomes" id="UP000007011">
    <property type="component" value="Chromosome"/>
</dbReference>
<dbReference type="GO" id="GO:0003723">
    <property type="term" value="F:RNA binding"/>
    <property type="evidence" value="ECO:0007669"/>
    <property type="project" value="InterPro"/>
</dbReference>
<dbReference type="GO" id="GO:0160147">
    <property type="term" value="F:tRNA pseudouridine(38-40) synthase activity"/>
    <property type="evidence" value="ECO:0007669"/>
    <property type="project" value="UniProtKB-EC"/>
</dbReference>
<dbReference type="GO" id="GO:0031119">
    <property type="term" value="P:tRNA pseudouridine synthesis"/>
    <property type="evidence" value="ECO:0007669"/>
    <property type="project" value="UniProtKB-UniRule"/>
</dbReference>
<dbReference type="CDD" id="cd02570">
    <property type="entry name" value="PseudoU_synth_EcTruA"/>
    <property type="match status" value="1"/>
</dbReference>
<dbReference type="FunFam" id="3.30.70.580:FF:000001">
    <property type="entry name" value="tRNA pseudouridine synthase A"/>
    <property type="match status" value="1"/>
</dbReference>
<dbReference type="FunFam" id="3.30.70.660:FF:000001">
    <property type="entry name" value="tRNA pseudouridine synthase A"/>
    <property type="match status" value="1"/>
</dbReference>
<dbReference type="Gene3D" id="3.30.70.660">
    <property type="entry name" value="Pseudouridine synthase I, catalytic domain, C-terminal subdomain"/>
    <property type="match status" value="1"/>
</dbReference>
<dbReference type="Gene3D" id="3.30.70.580">
    <property type="entry name" value="Pseudouridine synthase I, catalytic domain, N-terminal subdomain"/>
    <property type="match status" value="1"/>
</dbReference>
<dbReference type="HAMAP" id="MF_00171">
    <property type="entry name" value="TruA"/>
    <property type="match status" value="1"/>
</dbReference>
<dbReference type="InterPro" id="IPR020103">
    <property type="entry name" value="PsdUridine_synth_cat_dom_sf"/>
</dbReference>
<dbReference type="InterPro" id="IPR001406">
    <property type="entry name" value="PsdUridine_synth_TruA"/>
</dbReference>
<dbReference type="InterPro" id="IPR020097">
    <property type="entry name" value="PsdUridine_synth_TruA_a/b_dom"/>
</dbReference>
<dbReference type="InterPro" id="IPR020095">
    <property type="entry name" value="PsdUridine_synth_TruA_C"/>
</dbReference>
<dbReference type="InterPro" id="IPR020094">
    <property type="entry name" value="TruA/RsuA/RluB/E/F_N"/>
</dbReference>
<dbReference type="NCBIfam" id="TIGR00071">
    <property type="entry name" value="hisT_truA"/>
    <property type="match status" value="1"/>
</dbReference>
<dbReference type="PANTHER" id="PTHR11142">
    <property type="entry name" value="PSEUDOURIDYLATE SYNTHASE"/>
    <property type="match status" value="1"/>
</dbReference>
<dbReference type="PANTHER" id="PTHR11142:SF0">
    <property type="entry name" value="TRNA PSEUDOURIDINE SYNTHASE-LIKE 1"/>
    <property type="match status" value="1"/>
</dbReference>
<dbReference type="Pfam" id="PF01416">
    <property type="entry name" value="PseudoU_synth_1"/>
    <property type="match status" value="2"/>
</dbReference>
<dbReference type="PIRSF" id="PIRSF001430">
    <property type="entry name" value="tRNA_psdUrid_synth"/>
    <property type="match status" value="1"/>
</dbReference>
<dbReference type="SUPFAM" id="SSF55120">
    <property type="entry name" value="Pseudouridine synthase"/>
    <property type="match status" value="1"/>
</dbReference>